<reference key="1">
    <citation type="journal article" date="1995" name="Yeast">
        <title>Sequence of a 17.1 kb DNA fragment from chromosome X of Saccharomyces cerevisiae includes the mitochondrial ribosomal protein L8.</title>
        <authorList>
            <person name="Vandenbol M."/>
            <person name="Durand P."/>
            <person name="Dion C."/>
            <person name="Portetelle D."/>
            <person name="Hilger F."/>
        </authorList>
    </citation>
    <scope>NUCLEOTIDE SEQUENCE [GENOMIC DNA]</scope>
    <source>
        <strain>ATCC 204508 / S288c</strain>
    </source>
</reference>
<reference key="2">
    <citation type="journal article" date="1996" name="EMBO J.">
        <title>Complete nucleotide sequence of Saccharomyces cerevisiae chromosome X.</title>
        <authorList>
            <person name="Galibert F."/>
            <person name="Alexandraki D."/>
            <person name="Baur A."/>
            <person name="Boles E."/>
            <person name="Chalwatzis N."/>
            <person name="Chuat J.-C."/>
            <person name="Coster F."/>
            <person name="Cziepluch C."/>
            <person name="de Haan M."/>
            <person name="Domdey H."/>
            <person name="Durand P."/>
            <person name="Entian K.-D."/>
            <person name="Gatius M."/>
            <person name="Goffeau A."/>
            <person name="Grivell L.A."/>
            <person name="Hennemann A."/>
            <person name="Herbert C.J."/>
            <person name="Heumann K."/>
            <person name="Hilger F."/>
            <person name="Hollenberg C.P."/>
            <person name="Huang M.-E."/>
            <person name="Jacq C."/>
            <person name="Jauniaux J.-C."/>
            <person name="Katsoulou C."/>
            <person name="Kirchrath L."/>
            <person name="Kleine K."/>
            <person name="Kordes E."/>
            <person name="Koetter P."/>
            <person name="Liebl S."/>
            <person name="Louis E.J."/>
            <person name="Manus V."/>
            <person name="Mewes H.-W."/>
            <person name="Miosga T."/>
            <person name="Obermaier B."/>
            <person name="Perea J."/>
            <person name="Pohl T.M."/>
            <person name="Portetelle D."/>
            <person name="Pujol A."/>
            <person name="Purnelle B."/>
            <person name="Ramezani Rad M."/>
            <person name="Rasmussen S.W."/>
            <person name="Rose M."/>
            <person name="Rossau R."/>
            <person name="Schaaff-Gerstenschlaeger I."/>
            <person name="Smits P.H.M."/>
            <person name="Scarcez T."/>
            <person name="Soriano N."/>
            <person name="To Van D."/>
            <person name="Tzermia M."/>
            <person name="Van Broekhoven A."/>
            <person name="Vandenbol M."/>
            <person name="Wedler H."/>
            <person name="von Wettstein D."/>
            <person name="Wambutt R."/>
            <person name="Zagulski M."/>
            <person name="Zollner A."/>
            <person name="Karpfinger-Hartl L."/>
        </authorList>
    </citation>
    <scope>NUCLEOTIDE SEQUENCE [LARGE SCALE GENOMIC DNA]</scope>
    <source>
        <strain>ATCC 204508 / S288c</strain>
    </source>
</reference>
<reference key="3">
    <citation type="journal article" date="2014" name="G3 (Bethesda)">
        <title>The reference genome sequence of Saccharomyces cerevisiae: Then and now.</title>
        <authorList>
            <person name="Engel S.R."/>
            <person name="Dietrich F.S."/>
            <person name="Fisk D.G."/>
            <person name="Binkley G."/>
            <person name="Balakrishnan R."/>
            <person name="Costanzo M.C."/>
            <person name="Dwight S.S."/>
            <person name="Hitz B.C."/>
            <person name="Karra K."/>
            <person name="Nash R.S."/>
            <person name="Weng S."/>
            <person name="Wong E.D."/>
            <person name="Lloyd P."/>
            <person name="Skrzypek M.S."/>
            <person name="Miyasato S.R."/>
            <person name="Simison M."/>
            <person name="Cherry J.M."/>
        </authorList>
    </citation>
    <scope>GENOME REANNOTATION</scope>
    <source>
        <strain>ATCC 204508 / S288c</strain>
    </source>
</reference>
<reference key="4">
    <citation type="journal article" date="1999" name="Appl. Environ. Microbiol.">
        <title>Purification and properties of an esterase from the yeast Saccharomyces cerevisiae and identification of the encoding gene.</title>
        <authorList>
            <person name="Degrassi G."/>
            <person name="Uotila L."/>
            <person name="Klima R."/>
            <person name="Venturi V."/>
        </authorList>
    </citation>
    <scope>PROTEIN SEQUENCE OF 1-7</scope>
    <scope>FUNCTION</scope>
    <scope>SUBCELLULAR LOCATION</scope>
    <scope>SUBUNIT</scope>
    <scope>CATALYTIC ACTIVITY</scope>
    <scope>BIOPHYSICOCHEMICAL PROPERTIES</scope>
</reference>
<reference key="5">
    <citation type="journal article" date="2003" name="Nature">
        <title>Global analysis of protein expression in yeast.</title>
        <authorList>
            <person name="Ghaemmaghami S."/>
            <person name="Huh W.-K."/>
            <person name="Bower K."/>
            <person name="Howson R.W."/>
            <person name="Belle A."/>
            <person name="Dephoure N."/>
            <person name="O'Shea E.K."/>
            <person name="Weissman J.S."/>
        </authorList>
    </citation>
    <scope>LEVEL OF PROTEIN EXPRESSION [LARGE SCALE ANALYSIS]</scope>
</reference>
<reference key="6">
    <citation type="journal article" date="2012" name="Proc. Natl. Acad. Sci. U.S.A.">
        <title>N-terminal acetylome analyses and functional insights of the N-terminal acetyltransferase NatB.</title>
        <authorList>
            <person name="Van Damme P."/>
            <person name="Lasa M."/>
            <person name="Polevoda B."/>
            <person name="Gazquez C."/>
            <person name="Elosegui-Artola A."/>
            <person name="Kim D.S."/>
            <person name="De Juan-Pardo E."/>
            <person name="Demeyer K."/>
            <person name="Hole K."/>
            <person name="Larrea E."/>
            <person name="Timmerman E."/>
            <person name="Prieto J."/>
            <person name="Arnesen T."/>
            <person name="Sherman F."/>
            <person name="Gevaert K."/>
            <person name="Aldabe R."/>
        </authorList>
    </citation>
    <scope>IDENTIFICATION BY MASS SPECTROMETRY [LARGE SCALE ANALYSIS]</scope>
</reference>
<reference evidence="7 8" key="7">
    <citation type="journal article" date="2008" name="Biochemistry">
        <title>Structural characterization and reversal of the natural organophosphate resistance of a D-type esterase, Saccharomyces cerevisiae S-formylglutathione hydrolase.</title>
        <authorList>
            <person name="Legler P.M."/>
            <person name="Kumaran D."/>
            <person name="Swaminathan S."/>
            <person name="Studier F.W."/>
            <person name="Millard C.B."/>
        </authorList>
    </citation>
    <scope>X-RAY CRYSTALLOGRAPHY (2.17 ANGSTROMS)</scope>
</reference>
<reference evidence="9 10" key="8">
    <citation type="journal article" date="2012" name="Arch. Biochem. Biophys.">
        <title>A role for His-160 in peroxide inhibition of S. cerevisiae S-formylglutathione hydrolase: evidence for an oxidation sensitive motif.</title>
        <authorList>
            <person name="Legler P.M."/>
            <person name="Leary D.H."/>
            <person name="Hervey W.J."/>
            <person name="Millard C.B."/>
        </authorList>
    </citation>
    <scope>X-RAY CRYSTALLOGRAPHY (2.07 ANGSTROMS) IN COMPLEX WITH COPPER</scope>
</reference>
<name>SFGH_YEAST</name>
<protein>
    <recommendedName>
        <fullName evidence="5">S-formylglutathione hydrolase</fullName>
        <shortName evidence="5">FGH</shortName>
        <ecNumber evidence="2">3.1.2.12</ecNumber>
    </recommendedName>
</protein>
<dbReference type="EC" id="3.1.2.12" evidence="2"/>
<dbReference type="EMBL" id="Z34288">
    <property type="protein sequence ID" value="CAA84054.1"/>
    <property type="molecule type" value="Genomic_DNA"/>
</dbReference>
<dbReference type="EMBL" id="Z49343">
    <property type="protein sequence ID" value="CAA89359.1"/>
    <property type="molecule type" value="Genomic_DNA"/>
</dbReference>
<dbReference type="EMBL" id="X88851">
    <property type="protein sequence ID" value="CAA61307.1"/>
    <property type="molecule type" value="Genomic_DNA"/>
</dbReference>
<dbReference type="EMBL" id="BK006943">
    <property type="protein sequence ID" value="DAA08731.1"/>
    <property type="molecule type" value="Genomic_DNA"/>
</dbReference>
<dbReference type="PIR" id="S50803">
    <property type="entry name" value="S50803"/>
</dbReference>
<dbReference type="RefSeq" id="NP_012467.1">
    <property type="nucleotide sequence ID" value="NM_001181501.1"/>
</dbReference>
<dbReference type="PDB" id="1PV1">
    <property type="method" value="X-ray"/>
    <property type="resolution" value="2.30 A"/>
    <property type="chains" value="A/B/C/D=1-299"/>
</dbReference>
<dbReference type="PDB" id="3C6B">
    <property type="method" value="X-ray"/>
    <property type="resolution" value="2.17 A"/>
    <property type="chains" value="A=1-299"/>
</dbReference>
<dbReference type="PDB" id="4FLM">
    <property type="method" value="X-ray"/>
    <property type="resolution" value="2.41 A"/>
    <property type="chains" value="A/B=1-299"/>
</dbReference>
<dbReference type="PDB" id="4FOL">
    <property type="method" value="X-ray"/>
    <property type="resolution" value="2.07 A"/>
    <property type="chains" value="A/B/C/D=1-299"/>
</dbReference>
<dbReference type="PDBsum" id="1PV1"/>
<dbReference type="PDBsum" id="3C6B"/>
<dbReference type="PDBsum" id="4FLM"/>
<dbReference type="PDBsum" id="4FOL"/>
<dbReference type="SMR" id="P40363"/>
<dbReference type="BioGRID" id="33687">
    <property type="interactions" value="116"/>
</dbReference>
<dbReference type="DIP" id="DIP-4988N"/>
<dbReference type="FunCoup" id="P40363">
    <property type="interactions" value="821"/>
</dbReference>
<dbReference type="IntAct" id="P40363">
    <property type="interactions" value="4"/>
</dbReference>
<dbReference type="MINT" id="P40363"/>
<dbReference type="STRING" id="4932.YJL068C"/>
<dbReference type="ESTHER" id="yeast-yjg8">
    <property type="family name" value="A85-EsteraseD-FGH"/>
</dbReference>
<dbReference type="iPTMnet" id="P40363"/>
<dbReference type="PaxDb" id="4932-YJL068C"/>
<dbReference type="PeptideAtlas" id="P40363"/>
<dbReference type="TopDownProteomics" id="P40363"/>
<dbReference type="EnsemblFungi" id="YJL068C_mRNA">
    <property type="protein sequence ID" value="YJL068C"/>
    <property type="gene ID" value="YJL068C"/>
</dbReference>
<dbReference type="GeneID" id="853377"/>
<dbReference type="KEGG" id="sce:YJL068C"/>
<dbReference type="AGR" id="SGD:S000003604"/>
<dbReference type="SGD" id="S000003604">
    <property type="gene designation" value="YJL068C"/>
</dbReference>
<dbReference type="VEuPathDB" id="FungiDB:YJL068C"/>
<dbReference type="eggNOG" id="KOG3101">
    <property type="taxonomic scope" value="Eukaryota"/>
</dbReference>
<dbReference type="GeneTree" id="ENSGT00390000011864"/>
<dbReference type="HOGENOM" id="CLU_056472_0_1_1"/>
<dbReference type="InParanoid" id="P40363"/>
<dbReference type="OMA" id="PSDCPWG"/>
<dbReference type="OrthoDB" id="420518at2759"/>
<dbReference type="BioCyc" id="YEAST:YJL068C-MONOMER"/>
<dbReference type="BRENDA" id="3.1.2.12">
    <property type="organism ID" value="984"/>
</dbReference>
<dbReference type="Reactome" id="R-SCE-156590">
    <property type="pathway name" value="Glutathione conjugation"/>
</dbReference>
<dbReference type="BioGRID-ORCS" id="853377">
    <property type="hits" value="0 hits in 10 CRISPR screens"/>
</dbReference>
<dbReference type="EvolutionaryTrace" id="P40363"/>
<dbReference type="PRO" id="PR:P40363"/>
<dbReference type="Proteomes" id="UP000002311">
    <property type="component" value="Chromosome X"/>
</dbReference>
<dbReference type="RNAct" id="P40363">
    <property type="molecule type" value="protein"/>
</dbReference>
<dbReference type="GO" id="GO:0005829">
    <property type="term" value="C:cytosol"/>
    <property type="evidence" value="ECO:0000314"/>
    <property type="project" value="SGD"/>
</dbReference>
<dbReference type="GO" id="GO:0052689">
    <property type="term" value="F:carboxylic ester hydrolase activity"/>
    <property type="evidence" value="ECO:0007669"/>
    <property type="project" value="UniProtKB-KW"/>
</dbReference>
<dbReference type="GO" id="GO:0046872">
    <property type="term" value="F:metal ion binding"/>
    <property type="evidence" value="ECO:0007669"/>
    <property type="project" value="UniProtKB-KW"/>
</dbReference>
<dbReference type="GO" id="GO:0018738">
    <property type="term" value="F:S-formylglutathione hydrolase activity"/>
    <property type="evidence" value="ECO:0000314"/>
    <property type="project" value="SGD"/>
</dbReference>
<dbReference type="GO" id="GO:0046294">
    <property type="term" value="P:formaldehyde catabolic process"/>
    <property type="evidence" value="ECO:0000315"/>
    <property type="project" value="SGD"/>
</dbReference>
<dbReference type="FunFam" id="3.40.50.1820:FF:000002">
    <property type="entry name" value="S-formylglutathione hydrolase"/>
    <property type="match status" value="1"/>
</dbReference>
<dbReference type="Gene3D" id="3.40.50.1820">
    <property type="entry name" value="alpha/beta hydrolase"/>
    <property type="match status" value="1"/>
</dbReference>
<dbReference type="InterPro" id="IPR029058">
    <property type="entry name" value="AB_hydrolase_fold"/>
</dbReference>
<dbReference type="InterPro" id="IPR000801">
    <property type="entry name" value="Esterase-like"/>
</dbReference>
<dbReference type="InterPro" id="IPR014186">
    <property type="entry name" value="S-formylglutathione_hydrol"/>
</dbReference>
<dbReference type="NCBIfam" id="TIGR02821">
    <property type="entry name" value="fghA_ester_D"/>
    <property type="match status" value="1"/>
</dbReference>
<dbReference type="PANTHER" id="PTHR10061">
    <property type="entry name" value="S-FORMYLGLUTATHIONE HYDROLASE"/>
    <property type="match status" value="1"/>
</dbReference>
<dbReference type="PANTHER" id="PTHR10061:SF0">
    <property type="entry name" value="S-FORMYLGLUTATHIONE HYDROLASE"/>
    <property type="match status" value="1"/>
</dbReference>
<dbReference type="Pfam" id="PF00756">
    <property type="entry name" value="Esterase"/>
    <property type="match status" value="1"/>
</dbReference>
<dbReference type="SUPFAM" id="SSF53474">
    <property type="entry name" value="alpha/beta-Hydrolases"/>
    <property type="match status" value="1"/>
</dbReference>
<sequence length="299" mass="33934">MKVVKEFSVCGGRLIKLSHNSNSTKTSMNVNIYLPKHYYAQDFPRNKRIPTVFYLSGLTCTPDNASEKAFWQFQADKYGFAIVFPDTSPRGDEVANDPEGSWDFGQGAGFYLNATQEPYAQHYQMYDYIHKELPQTLDSHFNKNGDVKLDFLDNVAITGHSMGGYGAICGYLKGYSGKRYKSCSAFAPIVNPSNVPWGQKAFKGYLGEEKAQWEAYDPCLLIKNIRHVGDDRILIHVGDSDPFLEEHLKPELLLEAVKATSWQDYVEIKKVHGFDHSYYFVSTFVPEHAEFHARNLGLI</sequence>
<organism>
    <name type="scientific">Saccharomyces cerevisiae (strain ATCC 204508 / S288c)</name>
    <name type="common">Baker's yeast</name>
    <dbReference type="NCBI Taxonomy" id="559292"/>
    <lineage>
        <taxon>Eukaryota</taxon>
        <taxon>Fungi</taxon>
        <taxon>Dikarya</taxon>
        <taxon>Ascomycota</taxon>
        <taxon>Saccharomycotina</taxon>
        <taxon>Saccharomycetes</taxon>
        <taxon>Saccharomycetales</taxon>
        <taxon>Saccharomycetaceae</taxon>
        <taxon>Saccharomyces</taxon>
    </lineage>
</organism>
<feature type="chain" id="PRO_0000210342" description="S-formylglutathione hydrolase">
    <location>
        <begin position="1"/>
        <end position="299"/>
    </location>
</feature>
<feature type="active site" description="Charge relay system" evidence="1">
    <location>
        <position position="161"/>
    </location>
</feature>
<feature type="active site" description="Charge relay system" evidence="1">
    <location>
        <position position="241"/>
    </location>
</feature>
<feature type="active site" description="Charge relay system" evidence="1">
    <location>
        <position position="276"/>
    </location>
</feature>
<feature type="binding site" evidence="4 9">
    <location>
        <position position="1"/>
    </location>
    <ligand>
        <name>Cu cation</name>
        <dbReference type="ChEBI" id="CHEBI:23378"/>
    </ligand>
</feature>
<feature type="binding site" evidence="4 9">
    <location>
        <position position="140"/>
    </location>
    <ligand>
        <name>Cu cation</name>
        <dbReference type="ChEBI" id="CHEBI:23378"/>
    </ligand>
</feature>
<feature type="strand" evidence="11">
    <location>
        <begin position="2"/>
        <end position="9"/>
    </location>
</feature>
<feature type="strand" evidence="11">
    <location>
        <begin position="12"/>
        <end position="20"/>
    </location>
</feature>
<feature type="turn" evidence="11">
    <location>
        <begin position="22"/>
        <end position="24"/>
    </location>
</feature>
<feature type="strand" evidence="11">
    <location>
        <begin position="25"/>
        <end position="34"/>
    </location>
</feature>
<feature type="helix" evidence="11">
    <location>
        <begin position="36"/>
        <end position="39"/>
    </location>
</feature>
<feature type="strand" evidence="11">
    <location>
        <begin position="51"/>
        <end position="55"/>
    </location>
</feature>
<feature type="helix" evidence="11">
    <location>
        <begin position="62"/>
        <end position="68"/>
    </location>
</feature>
<feature type="helix" evidence="11">
    <location>
        <begin position="71"/>
        <end position="78"/>
    </location>
</feature>
<feature type="strand" evidence="11">
    <location>
        <begin position="81"/>
        <end position="85"/>
    </location>
</feature>
<feature type="strand" evidence="11">
    <location>
        <begin position="102"/>
        <end position="105"/>
    </location>
</feature>
<feature type="helix" evidence="11">
    <location>
        <begin position="117"/>
        <end position="120"/>
    </location>
</feature>
<feature type="helix" evidence="11">
    <location>
        <begin position="125"/>
        <end position="130"/>
    </location>
</feature>
<feature type="helix" evidence="11">
    <location>
        <begin position="132"/>
        <end position="141"/>
    </location>
</feature>
<feature type="strand" evidence="11">
    <location>
        <begin position="151"/>
        <end position="160"/>
    </location>
</feature>
<feature type="helix" evidence="11">
    <location>
        <begin position="162"/>
        <end position="173"/>
    </location>
</feature>
<feature type="helix" evidence="11">
    <location>
        <begin position="175"/>
        <end position="177"/>
    </location>
</feature>
<feature type="strand" evidence="11">
    <location>
        <begin position="181"/>
        <end position="187"/>
    </location>
</feature>
<feature type="helix" evidence="11">
    <location>
        <begin position="192"/>
        <end position="194"/>
    </location>
</feature>
<feature type="helix" evidence="11">
    <location>
        <begin position="196"/>
        <end position="205"/>
    </location>
</feature>
<feature type="helix" evidence="11">
    <location>
        <begin position="214"/>
        <end position="216"/>
    </location>
</feature>
<feature type="helix" evidence="11">
    <location>
        <begin position="218"/>
        <end position="221"/>
    </location>
</feature>
<feature type="helix" evidence="11">
    <location>
        <begin position="222"/>
        <end position="224"/>
    </location>
</feature>
<feature type="strand" evidence="11">
    <location>
        <begin position="233"/>
        <end position="238"/>
    </location>
</feature>
<feature type="helix" evidence="11">
    <location>
        <begin position="244"/>
        <end position="247"/>
    </location>
</feature>
<feature type="helix" evidence="11">
    <location>
        <begin position="251"/>
        <end position="257"/>
    </location>
</feature>
<feature type="turn" evidence="11">
    <location>
        <begin position="261"/>
        <end position="264"/>
    </location>
</feature>
<feature type="strand" evidence="11">
    <location>
        <begin position="266"/>
        <end position="271"/>
    </location>
</feature>
<feature type="helix" evidence="11">
    <location>
        <begin position="278"/>
        <end position="295"/>
    </location>
</feature>
<keyword id="KW-0002">3D-structure</keyword>
<keyword id="KW-0186">Copper</keyword>
<keyword id="KW-0963">Cytoplasm</keyword>
<keyword id="KW-0903">Direct protein sequencing</keyword>
<keyword id="KW-0378">Hydrolase</keyword>
<keyword id="KW-0479">Metal-binding</keyword>
<keyword id="KW-1185">Reference proteome</keyword>
<keyword id="KW-0719">Serine esterase</keyword>
<accession>P40363</accession>
<accession>D6VWB5</accession>
<proteinExistence type="evidence at protein level"/>
<evidence type="ECO:0000250" key="1">
    <source>
        <dbReference type="UniProtKB" id="P10768"/>
    </source>
</evidence>
<evidence type="ECO:0000269" key="2">
    <source>
    </source>
</evidence>
<evidence type="ECO:0000269" key="3">
    <source>
    </source>
</evidence>
<evidence type="ECO:0000269" key="4">
    <source>
    </source>
</evidence>
<evidence type="ECO:0000303" key="5">
    <source>
    </source>
</evidence>
<evidence type="ECO:0000305" key="6"/>
<evidence type="ECO:0007744" key="7">
    <source>
        <dbReference type="PDB" id="1PV1"/>
    </source>
</evidence>
<evidence type="ECO:0007744" key="8">
    <source>
        <dbReference type="PDB" id="3C6B"/>
    </source>
</evidence>
<evidence type="ECO:0007744" key="9">
    <source>
        <dbReference type="PDB" id="4FLM"/>
    </source>
</evidence>
<evidence type="ECO:0007744" key="10">
    <source>
        <dbReference type="PDB" id="4FOL"/>
    </source>
</evidence>
<evidence type="ECO:0007829" key="11">
    <source>
        <dbReference type="PDB" id="4FOL"/>
    </source>
</evidence>
<comment type="function">
    <text evidence="2">Serine hydrolase involved in the detoxification of formaldehyde.</text>
</comment>
<comment type="catalytic activity">
    <reaction evidence="2">
        <text>S-formylglutathione + H2O = formate + glutathione + H(+)</text>
        <dbReference type="Rhea" id="RHEA:14961"/>
        <dbReference type="ChEBI" id="CHEBI:15377"/>
        <dbReference type="ChEBI" id="CHEBI:15378"/>
        <dbReference type="ChEBI" id="CHEBI:15740"/>
        <dbReference type="ChEBI" id="CHEBI:57688"/>
        <dbReference type="ChEBI" id="CHEBI:57925"/>
        <dbReference type="EC" id="3.1.2.12"/>
    </reaction>
</comment>
<comment type="biophysicochemical properties">
    <phDependence>
        <text evidence="2">Optimum pH is 7.</text>
    </phDependence>
    <temperatureDependence>
        <text evidence="2">Optimum temperature is 50 degrees Celsius.</text>
    </temperatureDependence>
</comment>
<comment type="subunit">
    <text evidence="2">Monomer.</text>
</comment>
<comment type="subcellular location">
    <subcellularLocation>
        <location evidence="2">Cytoplasm</location>
    </subcellularLocation>
</comment>
<comment type="miscellaneous">
    <text evidence="3">Present with 1750 molecules/cell in log phase SD medium.</text>
</comment>
<comment type="similarity">
    <text evidence="6">Belongs to the esterase D family.</text>
</comment>
<gene>
    <name type="ordered locus">YJL068C</name>
    <name type="ORF">HRE299</name>
    <name type="ORF">J1102</name>
</gene>